<organism>
    <name type="scientific">Exiguobacterium sibiricum (strain DSM 17290 / CCUG 55495 / CIP 109462 / JCM 13490 / 255-15)</name>
    <dbReference type="NCBI Taxonomy" id="262543"/>
    <lineage>
        <taxon>Bacteria</taxon>
        <taxon>Bacillati</taxon>
        <taxon>Bacillota</taxon>
        <taxon>Bacilli</taxon>
        <taxon>Bacillales</taxon>
        <taxon>Bacillales Family XII. Incertae Sedis</taxon>
        <taxon>Exiguobacterium</taxon>
    </lineage>
</organism>
<reference key="1">
    <citation type="submission" date="2008-04" db="EMBL/GenBank/DDBJ databases">
        <title>Complete sequence of chromosome of Exiguobacterium sibiricum 255-15.</title>
        <authorList>
            <consortium name="US DOE Joint Genome Institute"/>
            <person name="Copeland A."/>
            <person name="Lucas S."/>
            <person name="Lapidus A."/>
            <person name="Glavina del Rio T."/>
            <person name="Dalin E."/>
            <person name="Tice H."/>
            <person name="Bruce D."/>
            <person name="Goodwin L."/>
            <person name="Pitluck S."/>
            <person name="Kiss H."/>
            <person name="Chertkov O."/>
            <person name="Monk C."/>
            <person name="Brettin T."/>
            <person name="Detter J.C."/>
            <person name="Han C."/>
            <person name="Kuske C.R."/>
            <person name="Schmutz J."/>
            <person name="Larimer F."/>
            <person name="Land M."/>
            <person name="Hauser L."/>
            <person name="Kyrpides N."/>
            <person name="Mikhailova N."/>
            <person name="Vishnivetskaya T."/>
            <person name="Rodrigues D.F."/>
            <person name="Gilichinsky D."/>
            <person name="Tiedje J."/>
            <person name="Richardson P."/>
        </authorList>
    </citation>
    <scope>NUCLEOTIDE SEQUENCE [LARGE SCALE GENOMIC DNA]</scope>
    <source>
        <strain>DSM 17290 / CCUG 55495 / CIP 109462 / JCM 13490 / 255-15</strain>
    </source>
</reference>
<feature type="chain" id="PRO_0000359191" description="Acireductone dioxygenase">
    <location>
        <begin position="1"/>
        <end position="179"/>
    </location>
</feature>
<feature type="binding site" evidence="1">
    <location>
        <position position="99"/>
    </location>
    <ligand>
        <name>Fe(2+)</name>
        <dbReference type="ChEBI" id="CHEBI:29033"/>
    </ligand>
</feature>
<feature type="binding site" evidence="1">
    <location>
        <position position="99"/>
    </location>
    <ligand>
        <name>Ni(2+)</name>
        <dbReference type="ChEBI" id="CHEBI:49786"/>
    </ligand>
</feature>
<feature type="binding site" evidence="1">
    <location>
        <position position="101"/>
    </location>
    <ligand>
        <name>Fe(2+)</name>
        <dbReference type="ChEBI" id="CHEBI:29033"/>
    </ligand>
</feature>
<feature type="binding site" evidence="1">
    <location>
        <position position="101"/>
    </location>
    <ligand>
        <name>Ni(2+)</name>
        <dbReference type="ChEBI" id="CHEBI:49786"/>
    </ligand>
</feature>
<feature type="binding site" evidence="1">
    <location>
        <position position="105"/>
    </location>
    <ligand>
        <name>Fe(2+)</name>
        <dbReference type="ChEBI" id="CHEBI:29033"/>
    </ligand>
</feature>
<feature type="binding site" evidence="1">
    <location>
        <position position="105"/>
    </location>
    <ligand>
        <name>Ni(2+)</name>
        <dbReference type="ChEBI" id="CHEBI:49786"/>
    </ligand>
</feature>
<feature type="binding site" evidence="1">
    <location>
        <position position="144"/>
    </location>
    <ligand>
        <name>Fe(2+)</name>
        <dbReference type="ChEBI" id="CHEBI:29033"/>
    </ligand>
</feature>
<feature type="binding site" evidence="1">
    <location>
        <position position="144"/>
    </location>
    <ligand>
        <name>Ni(2+)</name>
        <dbReference type="ChEBI" id="CHEBI:49786"/>
    </ligand>
</feature>
<feature type="site" description="May play a role in metal incorporation in vivo" evidence="1">
    <location>
        <position position="98"/>
    </location>
</feature>
<feature type="site" description="May play a role in transmitting local conformational changes" evidence="1">
    <location>
        <position position="104"/>
    </location>
</feature>
<feature type="site" description="Important to generate the dianion" evidence="1">
    <location>
        <position position="107"/>
    </location>
</feature>
<comment type="function">
    <text evidence="1">Catalyzes 2 different reactions between oxygen and the acireductone 1,2-dihydroxy-3-keto-5-methylthiopentene (DHK-MTPene) depending upon the metal bound in the active site. Fe-containing acireductone dioxygenase (Fe-ARD) produces formate and 2-keto-4-methylthiobutyrate (KMTB), the alpha-ketoacid precursor of methionine in the methionine recycle pathway. Ni-containing acireductone dioxygenase (Ni-ARD) produces methylthiopropionate, carbon monoxide and formate, and does not lie on the methionine recycle pathway.</text>
</comment>
<comment type="catalytic activity">
    <reaction evidence="1">
        <text>1,2-dihydroxy-5-(methylsulfanyl)pent-1-en-3-one + O2 = 3-(methylsulfanyl)propanoate + CO + formate + 2 H(+)</text>
        <dbReference type="Rhea" id="RHEA:14161"/>
        <dbReference type="ChEBI" id="CHEBI:15378"/>
        <dbReference type="ChEBI" id="CHEBI:15379"/>
        <dbReference type="ChEBI" id="CHEBI:15740"/>
        <dbReference type="ChEBI" id="CHEBI:17245"/>
        <dbReference type="ChEBI" id="CHEBI:49016"/>
        <dbReference type="ChEBI" id="CHEBI:49252"/>
        <dbReference type="EC" id="1.13.11.53"/>
    </reaction>
</comment>
<comment type="catalytic activity">
    <reaction evidence="1">
        <text>1,2-dihydroxy-5-(methylsulfanyl)pent-1-en-3-one + O2 = 4-methylsulfanyl-2-oxobutanoate + formate + 2 H(+)</text>
        <dbReference type="Rhea" id="RHEA:24504"/>
        <dbReference type="ChEBI" id="CHEBI:15378"/>
        <dbReference type="ChEBI" id="CHEBI:15379"/>
        <dbReference type="ChEBI" id="CHEBI:15740"/>
        <dbReference type="ChEBI" id="CHEBI:16723"/>
        <dbReference type="ChEBI" id="CHEBI:49252"/>
        <dbReference type="EC" id="1.13.11.54"/>
    </reaction>
</comment>
<comment type="cofactor">
    <cofactor evidence="1">
        <name>Fe(2+)</name>
        <dbReference type="ChEBI" id="CHEBI:29033"/>
    </cofactor>
    <text evidence="1">Binds 1 Fe(2+) cation per monomer.</text>
</comment>
<comment type="cofactor">
    <cofactor evidence="1">
        <name>Ni(2+)</name>
        <dbReference type="ChEBI" id="CHEBI:49786"/>
    </cofactor>
    <text evidence="1">Binds 1 nickel ion per monomer.</text>
</comment>
<comment type="pathway">
    <text evidence="1">Amino-acid biosynthesis; L-methionine biosynthesis via salvage pathway; L-methionine from S-methyl-5-thio-alpha-D-ribose 1-phosphate: step 5/6.</text>
</comment>
<comment type="subunit">
    <text evidence="1">Monomer.</text>
</comment>
<comment type="similarity">
    <text evidence="1">Belongs to the acireductone dioxygenase (ARD) family.</text>
</comment>
<evidence type="ECO:0000255" key="1">
    <source>
        <dbReference type="HAMAP-Rule" id="MF_01682"/>
    </source>
</evidence>
<gene>
    <name evidence="1" type="primary">mtnD</name>
    <name type="ordered locus">Exig_0427</name>
</gene>
<name>MTND_EXIS2</name>
<accession>B1YIX9</accession>
<keyword id="KW-0028">Amino-acid biosynthesis</keyword>
<keyword id="KW-0223">Dioxygenase</keyword>
<keyword id="KW-0408">Iron</keyword>
<keyword id="KW-0479">Metal-binding</keyword>
<keyword id="KW-0486">Methionine biosynthesis</keyword>
<keyword id="KW-0533">Nickel</keyword>
<keyword id="KW-0560">Oxidoreductase</keyword>
<keyword id="KW-1185">Reference proteome</keyword>
<protein>
    <recommendedName>
        <fullName evidence="1">Acireductone dioxygenase</fullName>
    </recommendedName>
    <alternativeName>
        <fullName evidence="1">1,2-dihydroxy-3-keto-5-methylthiopentene dioxygenase</fullName>
        <shortName evidence="1">DHK-MTPene dioxygenase</shortName>
    </alternativeName>
    <alternativeName>
        <fullName evidence="1">Acireductone dioxygenase (Fe(2+)-requiring)</fullName>
        <shortName evidence="1">ARD'</shortName>
        <shortName evidence="1">Fe-ARD</shortName>
        <ecNumber evidence="1">1.13.11.54</ecNumber>
    </alternativeName>
    <alternativeName>
        <fullName evidence="1">Acireductone dioxygenase (Ni(2+)-requiring)</fullName>
        <shortName evidence="1">ARD</shortName>
        <shortName evidence="1">Ni-ARD</shortName>
        <ecNumber evidence="1">1.13.11.53</ecNumber>
    </alternativeName>
</protein>
<dbReference type="EC" id="1.13.11.54" evidence="1"/>
<dbReference type="EC" id="1.13.11.53" evidence="1"/>
<dbReference type="EMBL" id="CP001022">
    <property type="protein sequence ID" value="ACB59909.1"/>
    <property type="molecule type" value="Genomic_DNA"/>
</dbReference>
<dbReference type="RefSeq" id="WP_012369333.1">
    <property type="nucleotide sequence ID" value="NC_010556.1"/>
</dbReference>
<dbReference type="SMR" id="B1YIX9"/>
<dbReference type="STRING" id="262543.Exig_0427"/>
<dbReference type="KEGG" id="esi:Exig_0427"/>
<dbReference type="eggNOG" id="COG1791">
    <property type="taxonomic scope" value="Bacteria"/>
</dbReference>
<dbReference type="HOGENOM" id="CLU_125400_0_0_9"/>
<dbReference type="OrthoDB" id="9795636at2"/>
<dbReference type="UniPathway" id="UPA00904">
    <property type="reaction ID" value="UER00878"/>
</dbReference>
<dbReference type="Proteomes" id="UP000001681">
    <property type="component" value="Chromosome"/>
</dbReference>
<dbReference type="GO" id="GO:0010308">
    <property type="term" value="F:acireductone dioxygenase (Ni2+-requiring) activity"/>
    <property type="evidence" value="ECO:0007669"/>
    <property type="project" value="UniProtKB-UniRule"/>
</dbReference>
<dbReference type="GO" id="GO:0010309">
    <property type="term" value="F:acireductone dioxygenase [iron(II)-requiring] activity"/>
    <property type="evidence" value="ECO:0007669"/>
    <property type="project" value="UniProtKB-UniRule"/>
</dbReference>
<dbReference type="GO" id="GO:0005506">
    <property type="term" value="F:iron ion binding"/>
    <property type="evidence" value="ECO:0007669"/>
    <property type="project" value="UniProtKB-UniRule"/>
</dbReference>
<dbReference type="GO" id="GO:0016151">
    <property type="term" value="F:nickel cation binding"/>
    <property type="evidence" value="ECO:0007669"/>
    <property type="project" value="UniProtKB-UniRule"/>
</dbReference>
<dbReference type="GO" id="GO:0019509">
    <property type="term" value="P:L-methionine salvage from methylthioadenosine"/>
    <property type="evidence" value="ECO:0007669"/>
    <property type="project" value="UniProtKB-UniRule"/>
</dbReference>
<dbReference type="GO" id="GO:0019284">
    <property type="term" value="P:L-methionine salvage from S-adenosylmethionine"/>
    <property type="evidence" value="ECO:0007669"/>
    <property type="project" value="InterPro"/>
</dbReference>
<dbReference type="CDD" id="cd02232">
    <property type="entry name" value="cupin_ARD"/>
    <property type="match status" value="1"/>
</dbReference>
<dbReference type="Gene3D" id="2.60.120.10">
    <property type="entry name" value="Jelly Rolls"/>
    <property type="match status" value="1"/>
</dbReference>
<dbReference type="HAMAP" id="MF_01682">
    <property type="entry name" value="Salvage_MtnD"/>
    <property type="match status" value="1"/>
</dbReference>
<dbReference type="InterPro" id="IPR004313">
    <property type="entry name" value="ARD"/>
</dbReference>
<dbReference type="InterPro" id="IPR023956">
    <property type="entry name" value="ARD_bac"/>
</dbReference>
<dbReference type="InterPro" id="IPR014710">
    <property type="entry name" value="RmlC-like_jellyroll"/>
</dbReference>
<dbReference type="InterPro" id="IPR011051">
    <property type="entry name" value="RmlC_Cupin_sf"/>
</dbReference>
<dbReference type="PANTHER" id="PTHR23418">
    <property type="entry name" value="ACIREDUCTONE DIOXYGENASE"/>
    <property type="match status" value="1"/>
</dbReference>
<dbReference type="PANTHER" id="PTHR23418:SF0">
    <property type="entry name" value="ACIREDUCTONE DIOXYGENASE"/>
    <property type="match status" value="1"/>
</dbReference>
<dbReference type="Pfam" id="PF03079">
    <property type="entry name" value="ARD"/>
    <property type="match status" value="1"/>
</dbReference>
<dbReference type="SUPFAM" id="SSF51182">
    <property type="entry name" value="RmlC-like cupins"/>
    <property type="match status" value="1"/>
</dbReference>
<sequence>MATVLFQKTNERYTDQNEVSAFLASRGVLYEQWDVSKLPAELVDTYTLTDADKQTILDTFQSEITDVSERRGYQTADIISLSDATPNLDELLVNFQKEHHHTDDEVRFIVSGHGVFAIQDDEVGYYNIELNPGDLISVPVNTRHYFTLQEDRKVVAVRIFVTTDGWVPIYEKDPIETAN</sequence>
<proteinExistence type="inferred from homology"/>